<evidence type="ECO:0000250" key="1"/>
<evidence type="ECO:0000255" key="2">
    <source>
        <dbReference type="HAMAP-Rule" id="MF_00103"/>
    </source>
</evidence>
<keyword id="KW-0227">DNA damage</keyword>
<keyword id="KW-0234">DNA repair</keyword>
<keyword id="KW-0238">DNA-binding</keyword>
<keyword id="KW-0326">Glycosidase</keyword>
<keyword id="KW-0378">Hydrolase</keyword>
<keyword id="KW-0456">Lyase</keyword>
<keyword id="KW-0479">Metal-binding</keyword>
<keyword id="KW-0511">Multifunctional enzyme</keyword>
<keyword id="KW-1185">Reference proteome</keyword>
<keyword id="KW-0862">Zinc</keyword>
<keyword id="KW-0863">Zinc-finger</keyword>
<dbReference type="EC" id="3.2.2.23" evidence="2"/>
<dbReference type="EC" id="4.2.99.18" evidence="2"/>
<dbReference type="EMBL" id="CP000304">
    <property type="protein sequence ID" value="ABP81630.1"/>
    <property type="molecule type" value="Genomic_DNA"/>
</dbReference>
<dbReference type="RefSeq" id="WP_011915011.1">
    <property type="nucleotide sequence ID" value="NC_009434.1"/>
</dbReference>
<dbReference type="SMR" id="A4VRM9"/>
<dbReference type="KEGG" id="psa:PST_4007"/>
<dbReference type="eggNOG" id="COG0266">
    <property type="taxonomic scope" value="Bacteria"/>
</dbReference>
<dbReference type="HOGENOM" id="CLU_038423_1_1_6"/>
<dbReference type="Proteomes" id="UP000000233">
    <property type="component" value="Chromosome"/>
</dbReference>
<dbReference type="GO" id="GO:0034039">
    <property type="term" value="F:8-oxo-7,8-dihydroguanine DNA N-glycosylase activity"/>
    <property type="evidence" value="ECO:0007669"/>
    <property type="project" value="TreeGrafter"/>
</dbReference>
<dbReference type="GO" id="GO:0140078">
    <property type="term" value="F:class I DNA-(apurinic or apyrimidinic site) endonuclease activity"/>
    <property type="evidence" value="ECO:0007669"/>
    <property type="project" value="UniProtKB-EC"/>
</dbReference>
<dbReference type="GO" id="GO:0003684">
    <property type="term" value="F:damaged DNA binding"/>
    <property type="evidence" value="ECO:0007669"/>
    <property type="project" value="InterPro"/>
</dbReference>
<dbReference type="GO" id="GO:0008270">
    <property type="term" value="F:zinc ion binding"/>
    <property type="evidence" value="ECO:0007669"/>
    <property type="project" value="UniProtKB-UniRule"/>
</dbReference>
<dbReference type="GO" id="GO:0006284">
    <property type="term" value="P:base-excision repair"/>
    <property type="evidence" value="ECO:0007669"/>
    <property type="project" value="InterPro"/>
</dbReference>
<dbReference type="CDD" id="cd08966">
    <property type="entry name" value="EcFpg-like_N"/>
    <property type="match status" value="1"/>
</dbReference>
<dbReference type="FunFam" id="1.10.8.50:FF:000003">
    <property type="entry name" value="Formamidopyrimidine-DNA glycosylase"/>
    <property type="match status" value="1"/>
</dbReference>
<dbReference type="FunFam" id="3.20.190.10:FF:000001">
    <property type="entry name" value="Formamidopyrimidine-DNA glycosylase"/>
    <property type="match status" value="1"/>
</dbReference>
<dbReference type="Gene3D" id="1.10.8.50">
    <property type="match status" value="1"/>
</dbReference>
<dbReference type="Gene3D" id="3.20.190.10">
    <property type="entry name" value="MutM-like, N-terminal"/>
    <property type="match status" value="1"/>
</dbReference>
<dbReference type="HAMAP" id="MF_00103">
    <property type="entry name" value="Fapy_DNA_glycosyl"/>
    <property type="match status" value="1"/>
</dbReference>
<dbReference type="InterPro" id="IPR015886">
    <property type="entry name" value="DNA_glyclase/AP_lyase_DNA-bd"/>
</dbReference>
<dbReference type="InterPro" id="IPR015887">
    <property type="entry name" value="DNA_glyclase_Znf_dom_DNA_BS"/>
</dbReference>
<dbReference type="InterPro" id="IPR020629">
    <property type="entry name" value="Formamido-pyr_DNA_Glyclase"/>
</dbReference>
<dbReference type="InterPro" id="IPR012319">
    <property type="entry name" value="FPG_cat"/>
</dbReference>
<dbReference type="InterPro" id="IPR035937">
    <property type="entry name" value="MutM-like_N-ter"/>
</dbReference>
<dbReference type="InterPro" id="IPR010979">
    <property type="entry name" value="Ribosomal_uS13-like_H2TH"/>
</dbReference>
<dbReference type="InterPro" id="IPR000214">
    <property type="entry name" value="Znf_DNA_glyclase/AP_lyase"/>
</dbReference>
<dbReference type="InterPro" id="IPR010663">
    <property type="entry name" value="Znf_FPG/IleRS"/>
</dbReference>
<dbReference type="NCBIfam" id="TIGR00577">
    <property type="entry name" value="fpg"/>
    <property type="match status" value="1"/>
</dbReference>
<dbReference type="NCBIfam" id="NF002211">
    <property type="entry name" value="PRK01103.1"/>
    <property type="match status" value="1"/>
</dbReference>
<dbReference type="PANTHER" id="PTHR22993">
    <property type="entry name" value="FORMAMIDOPYRIMIDINE-DNA GLYCOSYLASE"/>
    <property type="match status" value="1"/>
</dbReference>
<dbReference type="PANTHER" id="PTHR22993:SF9">
    <property type="entry name" value="FORMAMIDOPYRIMIDINE-DNA GLYCOSYLASE"/>
    <property type="match status" value="1"/>
</dbReference>
<dbReference type="Pfam" id="PF01149">
    <property type="entry name" value="Fapy_DNA_glyco"/>
    <property type="match status" value="1"/>
</dbReference>
<dbReference type="Pfam" id="PF06831">
    <property type="entry name" value="H2TH"/>
    <property type="match status" value="1"/>
</dbReference>
<dbReference type="Pfam" id="PF06827">
    <property type="entry name" value="zf-FPG_IleRS"/>
    <property type="match status" value="1"/>
</dbReference>
<dbReference type="SMART" id="SM00898">
    <property type="entry name" value="Fapy_DNA_glyco"/>
    <property type="match status" value="1"/>
</dbReference>
<dbReference type="SMART" id="SM01232">
    <property type="entry name" value="H2TH"/>
    <property type="match status" value="1"/>
</dbReference>
<dbReference type="SUPFAM" id="SSF57716">
    <property type="entry name" value="Glucocorticoid receptor-like (DNA-binding domain)"/>
    <property type="match status" value="1"/>
</dbReference>
<dbReference type="SUPFAM" id="SSF81624">
    <property type="entry name" value="N-terminal domain of MutM-like DNA repair proteins"/>
    <property type="match status" value="1"/>
</dbReference>
<dbReference type="SUPFAM" id="SSF46946">
    <property type="entry name" value="S13-like H2TH domain"/>
    <property type="match status" value="1"/>
</dbReference>
<dbReference type="PROSITE" id="PS51068">
    <property type="entry name" value="FPG_CAT"/>
    <property type="match status" value="1"/>
</dbReference>
<dbReference type="PROSITE" id="PS01242">
    <property type="entry name" value="ZF_FPG_1"/>
    <property type="match status" value="1"/>
</dbReference>
<dbReference type="PROSITE" id="PS51066">
    <property type="entry name" value="ZF_FPG_2"/>
    <property type="match status" value="1"/>
</dbReference>
<gene>
    <name evidence="2" type="primary">mutM</name>
    <name evidence="2" type="synonym">fpg</name>
    <name type="ordered locus">PST_4007</name>
</gene>
<accession>A4VRM9</accession>
<protein>
    <recommendedName>
        <fullName evidence="2">Formamidopyrimidine-DNA glycosylase</fullName>
        <shortName evidence="2">Fapy-DNA glycosylase</shortName>
        <ecNumber evidence="2">3.2.2.23</ecNumber>
    </recommendedName>
    <alternativeName>
        <fullName evidence="2">DNA-(apurinic or apyrimidinic site) lyase MutM</fullName>
        <shortName evidence="2">AP lyase MutM</shortName>
        <ecNumber evidence="2">4.2.99.18</ecNumber>
    </alternativeName>
</protein>
<reference key="1">
    <citation type="journal article" date="2008" name="Proc. Natl. Acad. Sci. U.S.A.">
        <title>Nitrogen fixation island and rhizosphere competence traits in the genome of root-associated Pseudomonas stutzeri A1501.</title>
        <authorList>
            <person name="Yan Y."/>
            <person name="Yang J."/>
            <person name="Dou Y."/>
            <person name="Chen M."/>
            <person name="Ping S."/>
            <person name="Peng J."/>
            <person name="Lu W."/>
            <person name="Zhang W."/>
            <person name="Yao Z."/>
            <person name="Li H."/>
            <person name="Liu W."/>
            <person name="He S."/>
            <person name="Geng L."/>
            <person name="Zhang X."/>
            <person name="Yang F."/>
            <person name="Yu H."/>
            <person name="Zhan Y."/>
            <person name="Li D."/>
            <person name="Lin Z."/>
            <person name="Wang Y."/>
            <person name="Elmerich C."/>
            <person name="Lin M."/>
            <person name="Jin Q."/>
        </authorList>
    </citation>
    <scope>NUCLEOTIDE SEQUENCE [LARGE SCALE GENOMIC DNA]</scope>
    <source>
        <strain>A1501</strain>
    </source>
</reference>
<name>FPG_STUS1</name>
<feature type="initiator methionine" description="Removed" evidence="1">
    <location>
        <position position="1"/>
    </location>
</feature>
<feature type="chain" id="PRO_1000008746" description="Formamidopyrimidine-DNA glycosylase">
    <location>
        <begin position="2"/>
        <end position="270"/>
    </location>
</feature>
<feature type="zinc finger region" description="FPG-type" evidence="2">
    <location>
        <begin position="236"/>
        <end position="270"/>
    </location>
</feature>
<feature type="active site" description="Schiff-base intermediate with DNA" evidence="2">
    <location>
        <position position="2"/>
    </location>
</feature>
<feature type="active site" description="Proton donor" evidence="2">
    <location>
        <position position="3"/>
    </location>
</feature>
<feature type="active site" description="Proton donor; for beta-elimination activity" evidence="2">
    <location>
        <position position="58"/>
    </location>
</feature>
<feature type="active site" description="Proton donor; for delta-elimination activity" evidence="2">
    <location>
        <position position="260"/>
    </location>
</feature>
<feature type="binding site" evidence="2">
    <location>
        <position position="91"/>
    </location>
    <ligand>
        <name>DNA</name>
        <dbReference type="ChEBI" id="CHEBI:16991"/>
    </ligand>
</feature>
<feature type="binding site" evidence="2">
    <location>
        <position position="110"/>
    </location>
    <ligand>
        <name>DNA</name>
        <dbReference type="ChEBI" id="CHEBI:16991"/>
    </ligand>
</feature>
<feature type="binding site" evidence="2">
    <location>
        <position position="151"/>
    </location>
    <ligand>
        <name>DNA</name>
        <dbReference type="ChEBI" id="CHEBI:16991"/>
    </ligand>
</feature>
<organism>
    <name type="scientific">Stutzerimonas stutzeri (strain A1501)</name>
    <name type="common">Pseudomonas stutzeri</name>
    <dbReference type="NCBI Taxonomy" id="379731"/>
    <lineage>
        <taxon>Bacteria</taxon>
        <taxon>Pseudomonadati</taxon>
        <taxon>Pseudomonadota</taxon>
        <taxon>Gammaproteobacteria</taxon>
        <taxon>Pseudomonadales</taxon>
        <taxon>Pseudomonadaceae</taxon>
        <taxon>Stutzerimonas</taxon>
    </lineage>
</organism>
<comment type="function">
    <text evidence="2">Involved in base excision repair of DNA damaged by oxidation or by mutagenic agents. Acts as a DNA glycosylase that recognizes and removes damaged bases. Has a preference for oxidized purines, such as 7,8-dihydro-8-oxoguanine (8-oxoG). Has AP (apurinic/apyrimidinic) lyase activity and introduces nicks in the DNA strand. Cleaves the DNA backbone by beta-delta elimination to generate a single-strand break at the site of the removed base with both 3'- and 5'-phosphates.</text>
</comment>
<comment type="catalytic activity">
    <reaction evidence="2">
        <text>Hydrolysis of DNA containing ring-opened 7-methylguanine residues, releasing 2,6-diamino-4-hydroxy-5-(N-methyl)formamidopyrimidine.</text>
        <dbReference type="EC" id="3.2.2.23"/>
    </reaction>
</comment>
<comment type="catalytic activity">
    <reaction evidence="2">
        <text>2'-deoxyribonucleotide-(2'-deoxyribose 5'-phosphate)-2'-deoxyribonucleotide-DNA = a 3'-end 2'-deoxyribonucleotide-(2,3-dehydro-2,3-deoxyribose 5'-phosphate)-DNA + a 5'-end 5'-phospho-2'-deoxyribonucleoside-DNA + H(+)</text>
        <dbReference type="Rhea" id="RHEA:66592"/>
        <dbReference type="Rhea" id="RHEA-COMP:13180"/>
        <dbReference type="Rhea" id="RHEA-COMP:16897"/>
        <dbReference type="Rhea" id="RHEA-COMP:17067"/>
        <dbReference type="ChEBI" id="CHEBI:15378"/>
        <dbReference type="ChEBI" id="CHEBI:136412"/>
        <dbReference type="ChEBI" id="CHEBI:157695"/>
        <dbReference type="ChEBI" id="CHEBI:167181"/>
        <dbReference type="EC" id="4.2.99.18"/>
    </reaction>
</comment>
<comment type="cofactor">
    <cofactor evidence="2">
        <name>Zn(2+)</name>
        <dbReference type="ChEBI" id="CHEBI:29105"/>
    </cofactor>
    <text evidence="2">Binds 1 zinc ion per subunit.</text>
</comment>
<comment type="subunit">
    <text evidence="2">Monomer.</text>
</comment>
<comment type="similarity">
    <text evidence="2">Belongs to the FPG family.</text>
</comment>
<sequence length="270" mass="30085">MPELPEVETTRRGIEPHLVGQRVSRVLVRDRRLRWPIPEDLDVRLSGQRIEAVERRAKYLLIRAESGTLIVHLGMSGSLRLVDAASPAAKHEHVDILLESGQALRYTDPRRFGAMLWSDEPLAHVLLASLGPEPLGEDFDGDRLYRLSRGRSMAVKPFIMDNAVVVGVGNIYASEALFAAGIDPRRPAGSISRARYLKLGEEIRRILAMAIERGGTTLRDFVGGDGKPGYFQQELFVYGRGGEFCKSCGSTLREIRLGQRASVYCSRCQR</sequence>
<proteinExistence type="inferred from homology"/>